<dbReference type="EC" id="5.6.1.7" evidence="1"/>
<dbReference type="EMBL" id="CP000884">
    <property type="protein sequence ID" value="ABX38289.1"/>
    <property type="molecule type" value="Genomic_DNA"/>
</dbReference>
<dbReference type="RefSeq" id="WP_012207458.1">
    <property type="nucleotide sequence ID" value="NC_010002.1"/>
</dbReference>
<dbReference type="SMR" id="A9BXL3"/>
<dbReference type="STRING" id="398578.Daci_5661"/>
<dbReference type="GeneID" id="24117879"/>
<dbReference type="KEGG" id="dac:Daci_5661"/>
<dbReference type="eggNOG" id="COG0459">
    <property type="taxonomic scope" value="Bacteria"/>
</dbReference>
<dbReference type="HOGENOM" id="CLU_016503_3_0_4"/>
<dbReference type="Proteomes" id="UP000000784">
    <property type="component" value="Chromosome"/>
</dbReference>
<dbReference type="GO" id="GO:0005737">
    <property type="term" value="C:cytoplasm"/>
    <property type="evidence" value="ECO:0007669"/>
    <property type="project" value="UniProtKB-SubCell"/>
</dbReference>
<dbReference type="GO" id="GO:0005524">
    <property type="term" value="F:ATP binding"/>
    <property type="evidence" value="ECO:0007669"/>
    <property type="project" value="UniProtKB-UniRule"/>
</dbReference>
<dbReference type="GO" id="GO:0140662">
    <property type="term" value="F:ATP-dependent protein folding chaperone"/>
    <property type="evidence" value="ECO:0007669"/>
    <property type="project" value="InterPro"/>
</dbReference>
<dbReference type="GO" id="GO:0016853">
    <property type="term" value="F:isomerase activity"/>
    <property type="evidence" value="ECO:0007669"/>
    <property type="project" value="UniProtKB-KW"/>
</dbReference>
<dbReference type="GO" id="GO:0051082">
    <property type="term" value="F:unfolded protein binding"/>
    <property type="evidence" value="ECO:0007669"/>
    <property type="project" value="UniProtKB-UniRule"/>
</dbReference>
<dbReference type="GO" id="GO:0042026">
    <property type="term" value="P:protein refolding"/>
    <property type="evidence" value="ECO:0007669"/>
    <property type="project" value="UniProtKB-UniRule"/>
</dbReference>
<dbReference type="CDD" id="cd03344">
    <property type="entry name" value="GroEL"/>
    <property type="match status" value="1"/>
</dbReference>
<dbReference type="FunFam" id="1.10.560.10:FF:000001">
    <property type="entry name" value="60 kDa chaperonin"/>
    <property type="match status" value="1"/>
</dbReference>
<dbReference type="FunFam" id="3.50.7.10:FF:000001">
    <property type="entry name" value="60 kDa chaperonin"/>
    <property type="match status" value="1"/>
</dbReference>
<dbReference type="Gene3D" id="3.50.7.10">
    <property type="entry name" value="GroEL"/>
    <property type="match status" value="1"/>
</dbReference>
<dbReference type="Gene3D" id="1.10.560.10">
    <property type="entry name" value="GroEL-like equatorial domain"/>
    <property type="match status" value="1"/>
</dbReference>
<dbReference type="Gene3D" id="3.30.260.10">
    <property type="entry name" value="TCP-1-like chaperonin intermediate domain"/>
    <property type="match status" value="1"/>
</dbReference>
<dbReference type="HAMAP" id="MF_00600">
    <property type="entry name" value="CH60"/>
    <property type="match status" value="1"/>
</dbReference>
<dbReference type="InterPro" id="IPR018370">
    <property type="entry name" value="Chaperonin_Cpn60_CS"/>
</dbReference>
<dbReference type="InterPro" id="IPR001844">
    <property type="entry name" value="Cpn60/GroEL"/>
</dbReference>
<dbReference type="InterPro" id="IPR002423">
    <property type="entry name" value="Cpn60/GroEL/TCP-1"/>
</dbReference>
<dbReference type="InterPro" id="IPR027409">
    <property type="entry name" value="GroEL-like_apical_dom_sf"/>
</dbReference>
<dbReference type="InterPro" id="IPR027413">
    <property type="entry name" value="GROEL-like_equatorial_sf"/>
</dbReference>
<dbReference type="InterPro" id="IPR027410">
    <property type="entry name" value="TCP-1-like_intermed_sf"/>
</dbReference>
<dbReference type="NCBIfam" id="TIGR02348">
    <property type="entry name" value="GroEL"/>
    <property type="match status" value="1"/>
</dbReference>
<dbReference type="NCBIfam" id="NF000592">
    <property type="entry name" value="PRK00013.1"/>
    <property type="match status" value="1"/>
</dbReference>
<dbReference type="NCBIfam" id="NF009487">
    <property type="entry name" value="PRK12849.1"/>
    <property type="match status" value="1"/>
</dbReference>
<dbReference type="NCBIfam" id="NF009488">
    <property type="entry name" value="PRK12850.1"/>
    <property type="match status" value="1"/>
</dbReference>
<dbReference type="NCBIfam" id="NF009489">
    <property type="entry name" value="PRK12851.1"/>
    <property type="match status" value="1"/>
</dbReference>
<dbReference type="PANTHER" id="PTHR45633">
    <property type="entry name" value="60 KDA HEAT SHOCK PROTEIN, MITOCHONDRIAL"/>
    <property type="match status" value="1"/>
</dbReference>
<dbReference type="Pfam" id="PF00118">
    <property type="entry name" value="Cpn60_TCP1"/>
    <property type="match status" value="1"/>
</dbReference>
<dbReference type="PRINTS" id="PR00298">
    <property type="entry name" value="CHAPERONIN60"/>
</dbReference>
<dbReference type="SUPFAM" id="SSF52029">
    <property type="entry name" value="GroEL apical domain-like"/>
    <property type="match status" value="1"/>
</dbReference>
<dbReference type="SUPFAM" id="SSF48592">
    <property type="entry name" value="GroEL equatorial domain-like"/>
    <property type="match status" value="1"/>
</dbReference>
<dbReference type="SUPFAM" id="SSF54849">
    <property type="entry name" value="GroEL-intermediate domain like"/>
    <property type="match status" value="1"/>
</dbReference>
<dbReference type="PROSITE" id="PS00296">
    <property type="entry name" value="CHAPERONINS_CPN60"/>
    <property type="match status" value="1"/>
</dbReference>
<reference key="1">
    <citation type="submission" date="2007-11" db="EMBL/GenBank/DDBJ databases">
        <title>Complete sequence of Delftia acidovorans DSM 14801 / SPH-1.</title>
        <authorList>
            <person name="Copeland A."/>
            <person name="Lucas S."/>
            <person name="Lapidus A."/>
            <person name="Barry K."/>
            <person name="Glavina del Rio T."/>
            <person name="Dalin E."/>
            <person name="Tice H."/>
            <person name="Pitluck S."/>
            <person name="Lowry S."/>
            <person name="Clum A."/>
            <person name="Schmutz J."/>
            <person name="Larimer F."/>
            <person name="Land M."/>
            <person name="Hauser L."/>
            <person name="Kyrpides N."/>
            <person name="Kim E."/>
            <person name="Schleheck D."/>
            <person name="Richardson P."/>
        </authorList>
    </citation>
    <scope>NUCLEOTIDE SEQUENCE [LARGE SCALE GENOMIC DNA]</scope>
    <source>
        <strain>DSM 14801 / SPH-1</strain>
    </source>
</reference>
<organism>
    <name type="scientific">Delftia acidovorans (strain DSM 14801 / SPH-1)</name>
    <dbReference type="NCBI Taxonomy" id="398578"/>
    <lineage>
        <taxon>Bacteria</taxon>
        <taxon>Pseudomonadati</taxon>
        <taxon>Pseudomonadota</taxon>
        <taxon>Betaproteobacteria</taxon>
        <taxon>Burkholderiales</taxon>
        <taxon>Comamonadaceae</taxon>
        <taxon>Delftia</taxon>
    </lineage>
</organism>
<sequence length="547" mass="57159">MAAKDVVFGGEARARMVEGVNILANAVKVTLGPKGRNVVLERSFGAPTVTKDGVSVAKEIELKDKLQNMGAQLVKEVASKTNDIAGDGTTTATVLAQAIVREGAKYVAAGLNPMDLKRGIDKAVAALVEELKKQSKATTTSKEIAQVGSISANSDESVGSIIAEAMDKVGKEGVITVEEGKSLANELDVVEGMQFDRGYLSPYFINNPEKQVALLDNPFVLLFDKKISNIRDLLPTLEAVAKAGRPLLIIAEDVEGEALATLVVNTIRGILKVVAVKAPGFGDRRKAMLEDIAILTGGKVIAEEVGLALDKVTLEDLGQAVRIEIGKENTTIIDGAGQAAEIEARVKQIRIQIEEATSDYDREKLQERVAKLAGGVAVIKVGAATEVEMKEKKARVEDALHATRAAVEEGIVAGGGVALLRAKQAVGDLKTGDAEQDAGIKLIMKAIEAPLREIVANAGGEPSVVVNAVLNGSGNYGFNAANDTYGDMLEMGILDPTKVTRTALQNAASVASLLLTTEAMIAESPKAEGGPAMPDMGGMGGMGGMGM</sequence>
<evidence type="ECO:0000255" key="1">
    <source>
        <dbReference type="HAMAP-Rule" id="MF_00600"/>
    </source>
</evidence>
<keyword id="KW-0067">ATP-binding</keyword>
<keyword id="KW-0143">Chaperone</keyword>
<keyword id="KW-0963">Cytoplasm</keyword>
<keyword id="KW-0413">Isomerase</keyword>
<keyword id="KW-0547">Nucleotide-binding</keyword>
<keyword id="KW-1185">Reference proteome</keyword>
<gene>
    <name evidence="1" type="primary">groEL</name>
    <name evidence="1" type="synonym">groL</name>
    <name type="ordered locus">Daci_5661</name>
</gene>
<name>CH60_DELAS</name>
<protein>
    <recommendedName>
        <fullName evidence="1">Chaperonin GroEL</fullName>
        <ecNumber evidence="1">5.6.1.7</ecNumber>
    </recommendedName>
    <alternativeName>
        <fullName evidence="1">60 kDa chaperonin</fullName>
    </alternativeName>
    <alternativeName>
        <fullName evidence="1">Chaperonin-60</fullName>
        <shortName evidence="1">Cpn60</shortName>
    </alternativeName>
</protein>
<comment type="function">
    <text evidence="1">Together with its co-chaperonin GroES, plays an essential role in assisting protein folding. The GroEL-GroES system forms a nano-cage that allows encapsulation of the non-native substrate proteins and provides a physical environment optimized to promote and accelerate protein folding.</text>
</comment>
<comment type="catalytic activity">
    <reaction evidence="1">
        <text>ATP + H2O + a folded polypeptide = ADP + phosphate + an unfolded polypeptide.</text>
        <dbReference type="EC" id="5.6.1.7"/>
    </reaction>
</comment>
<comment type="subunit">
    <text evidence="1">Forms a cylinder of 14 subunits composed of two heptameric rings stacked back-to-back. Interacts with the co-chaperonin GroES.</text>
</comment>
<comment type="subcellular location">
    <subcellularLocation>
        <location evidence="1">Cytoplasm</location>
    </subcellularLocation>
</comment>
<comment type="similarity">
    <text evidence="1">Belongs to the chaperonin (HSP60) family.</text>
</comment>
<proteinExistence type="inferred from homology"/>
<accession>A9BXL3</accession>
<feature type="chain" id="PRO_1000130000" description="Chaperonin GroEL">
    <location>
        <begin position="1"/>
        <end position="547"/>
    </location>
</feature>
<feature type="binding site" evidence="1">
    <location>
        <begin position="30"/>
        <end position="33"/>
    </location>
    <ligand>
        <name>ATP</name>
        <dbReference type="ChEBI" id="CHEBI:30616"/>
    </ligand>
</feature>
<feature type="binding site" evidence="1">
    <location>
        <position position="51"/>
    </location>
    <ligand>
        <name>ATP</name>
        <dbReference type="ChEBI" id="CHEBI:30616"/>
    </ligand>
</feature>
<feature type="binding site" evidence="1">
    <location>
        <begin position="87"/>
        <end position="91"/>
    </location>
    <ligand>
        <name>ATP</name>
        <dbReference type="ChEBI" id="CHEBI:30616"/>
    </ligand>
</feature>
<feature type="binding site" evidence="1">
    <location>
        <position position="415"/>
    </location>
    <ligand>
        <name>ATP</name>
        <dbReference type="ChEBI" id="CHEBI:30616"/>
    </ligand>
</feature>
<feature type="binding site" evidence="1">
    <location>
        <begin position="479"/>
        <end position="481"/>
    </location>
    <ligand>
        <name>ATP</name>
        <dbReference type="ChEBI" id="CHEBI:30616"/>
    </ligand>
</feature>
<feature type="binding site" evidence="1">
    <location>
        <position position="495"/>
    </location>
    <ligand>
        <name>ATP</name>
        <dbReference type="ChEBI" id="CHEBI:30616"/>
    </ligand>
</feature>